<proteinExistence type="inferred from homology"/>
<comment type="function">
    <text evidence="1">Bidirectionally degrades single-stranded DNA into large acid-insoluble oligonucleotides, which are then degraded further into small acid-soluble oligonucleotides.</text>
</comment>
<comment type="catalytic activity">
    <reaction evidence="1">
        <text>Exonucleolytic cleavage in either 5'- to 3'- or 3'- to 5'-direction to yield nucleoside 5'-phosphates.</text>
        <dbReference type="EC" id="3.1.11.6"/>
    </reaction>
</comment>
<comment type="subunit">
    <text evidence="1">Heterooligomer composed of large and small subunits.</text>
</comment>
<comment type="subcellular location">
    <subcellularLocation>
        <location evidence="1">Cytoplasm</location>
    </subcellularLocation>
</comment>
<comment type="similarity">
    <text evidence="1">Belongs to the XseA family.</text>
</comment>
<dbReference type="EC" id="3.1.11.6" evidence="1"/>
<dbReference type="EMBL" id="CP000647">
    <property type="protein sequence ID" value="ABR78245.1"/>
    <property type="molecule type" value="Genomic_DNA"/>
</dbReference>
<dbReference type="RefSeq" id="WP_015958798.1">
    <property type="nucleotide sequence ID" value="NC_009648.1"/>
</dbReference>
<dbReference type="SMR" id="A6TCC4"/>
<dbReference type="STRING" id="272620.KPN_02835"/>
<dbReference type="PaxDb" id="272620-KPN_02835"/>
<dbReference type="EnsemblBacteria" id="ABR78245">
    <property type="protein sequence ID" value="ABR78245"/>
    <property type="gene ID" value="KPN_02835"/>
</dbReference>
<dbReference type="KEGG" id="kpn:KPN_02835"/>
<dbReference type="HOGENOM" id="CLU_023625_3_1_6"/>
<dbReference type="Proteomes" id="UP000000265">
    <property type="component" value="Chromosome"/>
</dbReference>
<dbReference type="GO" id="GO:0005737">
    <property type="term" value="C:cytoplasm"/>
    <property type="evidence" value="ECO:0007669"/>
    <property type="project" value="UniProtKB-SubCell"/>
</dbReference>
<dbReference type="GO" id="GO:0009318">
    <property type="term" value="C:exodeoxyribonuclease VII complex"/>
    <property type="evidence" value="ECO:0007669"/>
    <property type="project" value="InterPro"/>
</dbReference>
<dbReference type="GO" id="GO:0008855">
    <property type="term" value="F:exodeoxyribonuclease VII activity"/>
    <property type="evidence" value="ECO:0007669"/>
    <property type="project" value="UniProtKB-UniRule"/>
</dbReference>
<dbReference type="GO" id="GO:0003676">
    <property type="term" value="F:nucleic acid binding"/>
    <property type="evidence" value="ECO:0007669"/>
    <property type="project" value="InterPro"/>
</dbReference>
<dbReference type="GO" id="GO:0006308">
    <property type="term" value="P:DNA catabolic process"/>
    <property type="evidence" value="ECO:0007669"/>
    <property type="project" value="UniProtKB-UniRule"/>
</dbReference>
<dbReference type="CDD" id="cd04489">
    <property type="entry name" value="ExoVII_LU_OBF"/>
    <property type="match status" value="1"/>
</dbReference>
<dbReference type="HAMAP" id="MF_00378">
    <property type="entry name" value="Exonuc_7_L"/>
    <property type="match status" value="1"/>
</dbReference>
<dbReference type="InterPro" id="IPR003753">
    <property type="entry name" value="Exonuc_VII_L"/>
</dbReference>
<dbReference type="InterPro" id="IPR020579">
    <property type="entry name" value="Exonuc_VII_lsu_C"/>
</dbReference>
<dbReference type="InterPro" id="IPR025824">
    <property type="entry name" value="OB-fold_nuc-bd_dom"/>
</dbReference>
<dbReference type="NCBIfam" id="TIGR00237">
    <property type="entry name" value="xseA"/>
    <property type="match status" value="1"/>
</dbReference>
<dbReference type="PANTHER" id="PTHR30008">
    <property type="entry name" value="EXODEOXYRIBONUCLEASE 7 LARGE SUBUNIT"/>
    <property type="match status" value="1"/>
</dbReference>
<dbReference type="PANTHER" id="PTHR30008:SF0">
    <property type="entry name" value="EXODEOXYRIBONUCLEASE 7 LARGE SUBUNIT"/>
    <property type="match status" value="1"/>
</dbReference>
<dbReference type="Pfam" id="PF02601">
    <property type="entry name" value="Exonuc_VII_L"/>
    <property type="match status" value="1"/>
</dbReference>
<dbReference type="Pfam" id="PF13742">
    <property type="entry name" value="tRNA_anti_2"/>
    <property type="match status" value="1"/>
</dbReference>
<gene>
    <name evidence="1" type="primary">xseA</name>
    <name type="ordered locus">KPN78578_27840</name>
    <name type="ORF">KPN_02835</name>
</gene>
<feature type="chain" id="PRO_1000048775" description="Exodeoxyribonuclease 7 large subunit">
    <location>
        <begin position="1"/>
        <end position="463"/>
    </location>
</feature>
<organism>
    <name type="scientific">Klebsiella pneumoniae subsp. pneumoniae (strain ATCC 700721 / MGH 78578)</name>
    <dbReference type="NCBI Taxonomy" id="272620"/>
    <lineage>
        <taxon>Bacteria</taxon>
        <taxon>Pseudomonadati</taxon>
        <taxon>Pseudomonadota</taxon>
        <taxon>Gammaproteobacteria</taxon>
        <taxon>Enterobacterales</taxon>
        <taxon>Enterobacteriaceae</taxon>
        <taxon>Klebsiella/Raoultella group</taxon>
        <taxon>Klebsiella</taxon>
        <taxon>Klebsiella pneumoniae complex</taxon>
    </lineage>
</organism>
<evidence type="ECO:0000255" key="1">
    <source>
        <dbReference type="HAMAP-Rule" id="MF_00378"/>
    </source>
</evidence>
<reference key="1">
    <citation type="submission" date="2006-09" db="EMBL/GenBank/DDBJ databases">
        <authorList>
            <consortium name="The Klebsiella pneumonia Genome Sequencing Project"/>
            <person name="McClelland M."/>
            <person name="Sanderson E.K."/>
            <person name="Spieth J."/>
            <person name="Clifton W.S."/>
            <person name="Latreille P."/>
            <person name="Sabo A."/>
            <person name="Pepin K."/>
            <person name="Bhonagiri V."/>
            <person name="Porwollik S."/>
            <person name="Ali J."/>
            <person name="Wilson R.K."/>
        </authorList>
    </citation>
    <scope>NUCLEOTIDE SEQUENCE [LARGE SCALE GENOMIC DNA]</scope>
    <source>
        <strain>ATCC 700721 / MGH 78578</strain>
    </source>
</reference>
<name>EX7L_KLEP7</name>
<sequence length="463" mass="52481">MLPSQSPAIFTVSRLNQTVRLLLEREMGQVWISGEISNFSQPSSGHWYFTLKDDNAQVRCAMFRNSNRRVTFRPQHGQQVLVRANITLYEPRGDYQIIVESMQPAGEGLLQQKYEQLKAQLTAEGLFEQKHKQALPSPAHCVGVITSKTGAALHDILHVLRRRDPGLPVIIYPTSVQGDDAPGQIVRAIALANARQECDVLIVGRGGGSLEDLWSFNDERVARAIFASQIPIVSAVGHETDVTIADFVADLRAPTPSAAAEIVSRNQQELLRQLQSGQQRLEMAMDYFLASRQRRFTQLFHRLQQQHPQLRLARQQTALERLRQRMRIAVESQLKRAEQRQKRTVQRLNHYNPQPRIHRAQSRIQQLEYRLAEIMRGRLSERRERFGNAVTHLEAVSPLATLARGYSVTSVSDGTVLKQTKQVKTGDLLTTRLKDGWVESEVKQIAPVKKTRARKPSPTKPAE</sequence>
<accession>A6TCC4</accession>
<protein>
    <recommendedName>
        <fullName evidence="1">Exodeoxyribonuclease 7 large subunit</fullName>
        <ecNumber evidence="1">3.1.11.6</ecNumber>
    </recommendedName>
    <alternativeName>
        <fullName evidence="1">Exodeoxyribonuclease VII large subunit</fullName>
        <shortName evidence="1">Exonuclease VII large subunit</shortName>
    </alternativeName>
</protein>
<keyword id="KW-0963">Cytoplasm</keyword>
<keyword id="KW-0269">Exonuclease</keyword>
<keyword id="KW-0378">Hydrolase</keyword>
<keyword id="KW-0540">Nuclease</keyword>